<comment type="function">
    <text evidence="1">Initiates and terminates the replication only of its own subviral DNA molecule. The closed circular ssDNA genome is first converted to a superhelical dsDNA. Rep binds a specific hairpin at the genome origin of replication. Introduces an endonucleolytic nick within the intergenic region of the genome, thereby initiating the rolling circle replication (RCR). Following cleavage, binds covalently to the 5'-phosphate of DNA as a tyrosyl ester. The cleavage gives rise to a free 3'-OH that serves as a primer for the cellular DNA polymerase. The polymerase synthesizes the (+) strand DNA by rolling circle mechanism. After one round of replication, a Rep-catalyzed nucleotidyl transfer reaction releases a circular single-stranded virus genome, thereby terminating the replication. Displays origin-specific DNA cleavage, nucleotidyl transferase, ATPase and helicase activities (By similarity).</text>
</comment>
<comment type="catalytic activity">
    <reaction>
        <text>ATP + H2O = ADP + phosphate + H(+)</text>
        <dbReference type="Rhea" id="RHEA:13065"/>
        <dbReference type="ChEBI" id="CHEBI:15377"/>
        <dbReference type="ChEBI" id="CHEBI:15378"/>
        <dbReference type="ChEBI" id="CHEBI:30616"/>
        <dbReference type="ChEBI" id="CHEBI:43474"/>
        <dbReference type="ChEBI" id="CHEBI:456216"/>
    </reaction>
</comment>
<comment type="cofactor">
    <cofactor evidence="1">
        <name>Mg(2+)</name>
        <dbReference type="ChEBI" id="CHEBI:18420"/>
    </cofactor>
    <cofactor evidence="1">
        <name>Mn(2+)</name>
        <dbReference type="ChEBI" id="CHEBI:29035"/>
    </cofactor>
    <text evidence="1">Divalent metal cations, possibly Mg(2+) or Mn(2+).</text>
</comment>
<comment type="subunit">
    <text evidence="1 4">Homooligomer (Potential). Rep binds to repeated DNA motifs (iterons) (By similarity).</text>
</comment>
<comment type="subcellular location">
    <subcellularLocation>
        <location evidence="4">Host nucleus</location>
    </subcellularLocation>
</comment>
<comment type="domain">
    <text>There are 3 rolling circle replication (RCR) motifs. RCR-2 is probably involved in metal coordination. RCR-3 is required for phosphodiester bond cleavage for initiation of RCR.</text>
</comment>
<comment type="miscellaneous">
    <text>The genome of nanoviruses is composed of six to eight segments. In addition, some isolates contain subviral DNAs.</text>
</comment>
<comment type="similarity">
    <text evidence="4">Belongs to the nanoviridea/circoviridae replication-associated protein family.</text>
</comment>
<comment type="caution">
    <text evidence="4">This protein is encoded by a subviral DNA that is not present in all isolates of the virus.</text>
</comment>
<feature type="chain" id="PRO_0000378528" description="Para-Rep C10">
    <location>
        <begin position="1"/>
        <end position="283"/>
    </location>
</feature>
<feature type="domain" description="CRESS-DNA virus Rep endonuclease" evidence="3">
    <location>
        <begin position="3"/>
        <end position="96"/>
    </location>
</feature>
<feature type="short sequence motif" description="RCR-1" evidence="3">
    <location>
        <begin position="10"/>
        <end position="13"/>
    </location>
</feature>
<feature type="short sequence motif" description="RCR-2" evidence="3">
    <location>
        <begin position="42"/>
        <end position="44"/>
    </location>
</feature>
<feature type="short sequence motif" description="Nuclear localization signal" evidence="2">
    <location>
        <begin position="51"/>
        <end position="71"/>
    </location>
</feature>
<feature type="short sequence motif" description="RCR-3" evidence="3">
    <location>
        <begin position="79"/>
        <end position="82"/>
    </location>
</feature>
<feature type="short sequence motif" description="Nuclear localization signal" evidence="2">
    <location>
        <begin position="96"/>
        <end position="102"/>
    </location>
</feature>
<feature type="active site" description="For DNA cleavage activity" evidence="3">
    <location>
        <position position="79"/>
    </location>
</feature>
<feature type="binding site" evidence="2">
    <location>
        <position position="36"/>
    </location>
    <ligand>
        <name>a divalent metal cation</name>
        <dbReference type="ChEBI" id="CHEBI:60240"/>
    </ligand>
</feature>
<feature type="binding site" evidence="2">
    <location>
        <position position="42"/>
    </location>
    <ligand>
        <name>a divalent metal cation</name>
        <dbReference type="ChEBI" id="CHEBI:60240"/>
    </ligand>
</feature>
<feature type="binding site" evidence="2">
    <location>
        <position position="84"/>
    </location>
    <ligand>
        <name>a divalent metal cation</name>
        <dbReference type="ChEBI" id="CHEBI:60240"/>
    </ligand>
</feature>
<feature type="binding site" evidence="1">
    <location>
        <begin position="172"/>
        <end position="180"/>
    </location>
    <ligand>
        <name>ATP</name>
        <dbReference type="ChEBI" id="CHEBI:30616"/>
    </ligand>
</feature>
<gene>
    <name type="primary">C10</name>
</gene>
<name>REP10_MVD10</name>
<proteinExistence type="inferred from homology"/>
<keyword id="KW-0067">ATP-binding</keyword>
<keyword id="KW-0190">Covalent protein-DNA linkage</keyword>
<keyword id="KW-0235">DNA replication</keyword>
<keyword id="KW-0238">DNA-binding</keyword>
<keyword id="KW-0255">Endonuclease</keyword>
<keyword id="KW-0347">Helicase</keyword>
<keyword id="KW-1048">Host nucleus</keyword>
<keyword id="KW-0378">Hydrolase</keyword>
<keyword id="KW-0479">Metal-binding</keyword>
<keyword id="KW-0511">Multifunctional enzyme</keyword>
<keyword id="KW-0540">Nuclease</keyword>
<keyword id="KW-0547">Nucleotide-binding</keyword>
<keyword id="KW-0548">Nucleotidyltransferase</keyword>
<keyword id="KW-1185">Reference proteome</keyword>
<keyword id="KW-0808">Transferase</keyword>
<evidence type="ECO:0000250" key="1"/>
<evidence type="ECO:0000255" key="2"/>
<evidence type="ECO:0000255" key="3">
    <source>
        <dbReference type="PROSITE-ProRule" id="PRU01364"/>
    </source>
</evidence>
<evidence type="ECO:0000305" key="4"/>
<accession>Q9Z034</accession>
<reference key="1">
    <citation type="journal article" date="1998" name="J. Gen. Virol.">
        <title>Sequences of ten circular ssDNA components associated with the milk vetch dwarf virus genome.</title>
        <authorList>
            <person name="Sano Y."/>
            <person name="Wada M."/>
            <person name="Hashimoto Y."/>
            <person name="Matsumoto T."/>
            <person name="Kojima M."/>
        </authorList>
    </citation>
    <scope>NUCLEOTIDE SEQUENCE [GENOMIC DNA]</scope>
</reference>
<dbReference type="EC" id="2.7.7.-"/>
<dbReference type="EC" id="3.1.21.-"/>
<dbReference type="EC" id="3.6.1.-"/>
<dbReference type="EMBL" id="AB009047">
    <property type="protein sequence ID" value="BAA34048.1"/>
    <property type="molecule type" value="Genomic_DNA"/>
</dbReference>
<dbReference type="SMR" id="Q9Z034"/>
<dbReference type="KEGG" id="vg:18479554"/>
<dbReference type="Proteomes" id="UP000008236">
    <property type="component" value="Genome"/>
</dbReference>
<dbReference type="GO" id="GO:0042025">
    <property type="term" value="C:host cell nucleus"/>
    <property type="evidence" value="ECO:0007669"/>
    <property type="project" value="UniProtKB-SubCell"/>
</dbReference>
<dbReference type="GO" id="GO:0005524">
    <property type="term" value="F:ATP binding"/>
    <property type="evidence" value="ECO:0007669"/>
    <property type="project" value="UniProtKB-KW"/>
</dbReference>
<dbReference type="GO" id="GO:0016887">
    <property type="term" value="F:ATP hydrolysis activity"/>
    <property type="evidence" value="ECO:0007669"/>
    <property type="project" value="RHEA"/>
</dbReference>
<dbReference type="GO" id="GO:0003677">
    <property type="term" value="F:DNA binding"/>
    <property type="evidence" value="ECO:0007669"/>
    <property type="project" value="UniProtKB-KW"/>
</dbReference>
<dbReference type="GO" id="GO:0004519">
    <property type="term" value="F:endonuclease activity"/>
    <property type="evidence" value="ECO:0007669"/>
    <property type="project" value="UniProtKB-KW"/>
</dbReference>
<dbReference type="GO" id="GO:0046872">
    <property type="term" value="F:metal ion binding"/>
    <property type="evidence" value="ECO:0007669"/>
    <property type="project" value="UniProtKB-KW"/>
</dbReference>
<dbReference type="GO" id="GO:0016779">
    <property type="term" value="F:nucleotidyltransferase activity"/>
    <property type="evidence" value="ECO:0007669"/>
    <property type="project" value="UniProtKB-KW"/>
</dbReference>
<dbReference type="GO" id="GO:0003723">
    <property type="term" value="F:RNA binding"/>
    <property type="evidence" value="ECO:0007669"/>
    <property type="project" value="InterPro"/>
</dbReference>
<dbReference type="GO" id="GO:0003724">
    <property type="term" value="F:RNA helicase activity"/>
    <property type="evidence" value="ECO:0007669"/>
    <property type="project" value="InterPro"/>
</dbReference>
<dbReference type="GO" id="GO:0006260">
    <property type="term" value="P:DNA replication"/>
    <property type="evidence" value="ECO:0007669"/>
    <property type="project" value="UniProtKB-KW"/>
</dbReference>
<dbReference type="Gene3D" id="3.40.1310.20">
    <property type="match status" value="1"/>
</dbReference>
<dbReference type="InterPro" id="IPR049912">
    <property type="entry name" value="CRESS_DNA_REP"/>
</dbReference>
<dbReference type="InterPro" id="IPR000605">
    <property type="entry name" value="Helicase_SF3_ssDNA/RNA_vir"/>
</dbReference>
<dbReference type="Pfam" id="PF00910">
    <property type="entry name" value="RNA_helicase"/>
    <property type="match status" value="1"/>
</dbReference>
<dbReference type="Pfam" id="PF02407">
    <property type="entry name" value="Viral_Rep"/>
    <property type="match status" value="1"/>
</dbReference>
<dbReference type="PROSITE" id="PS52020">
    <property type="entry name" value="CRESS_DNA_REP"/>
    <property type="match status" value="1"/>
</dbReference>
<sequence>MPSIRAIHWCFTLNFSGKIPEIVWTADVQYSIWQHERVNHDHLQGYIQMKKQTTLKKMKELLPGAHLEMARAPKKAIDYCQKKETAIDGPWEYGTWISTGSHKRKLMERFDEDPEEMKLEDPGLYRRCLSRVQMTKVREKNSWDYDLRPWQDELLKTIEQEPDDRTILWVYGPHGGEGKSVFAKYLTLKEGWWYTAGGKATDMLYSYSLDPTCHVCIDIPRCTKEEYINYAVIEQIKNRIIINTKYEPCTIRDDGHNVHVIVFANYLPDVTRISEDRIKIIYC</sequence>
<protein>
    <recommendedName>
        <fullName>Para-Rep C10</fullName>
        <shortName>Rep10</shortName>
        <ecNumber>2.7.7.-</ecNumber>
        <ecNumber>3.1.21.-</ecNumber>
        <ecNumber>3.6.1.-</ecNumber>
    </recommendedName>
    <alternativeName>
        <fullName>Replication-associated protein of non-essential DNA C10</fullName>
    </alternativeName>
</protein>
<organism>
    <name type="scientific">Milk vetch dwarf C10 alphasatellite</name>
    <name type="common">MVDC10A</name>
    <dbReference type="NCBI Taxonomy" id="1455652"/>
    <lineage>
        <taxon>Viruses</taxon>
        <taxon>Viruses incertae sedis</taxon>
        <taxon>Alphasatellitidae</taxon>
        <taxon>Nanoalphasatellitinae</taxon>
        <taxon>Milvetsatellite</taxon>
        <taxon>Milk vetch dwarf alphasatellite 3</taxon>
    </lineage>
</organism>